<evidence type="ECO:0000255" key="1">
    <source>
        <dbReference type="HAMAP-Rule" id="MF_00173"/>
    </source>
</evidence>
<proteinExistence type="inferred from homology"/>
<gene>
    <name evidence="1" type="primary">argR</name>
    <name type="ordered locus">Sbal223_3628</name>
</gene>
<protein>
    <recommendedName>
        <fullName evidence="1">Arginine repressor</fullName>
    </recommendedName>
</protein>
<name>ARGR_SHEB2</name>
<feature type="chain" id="PRO_1000123804" description="Arginine repressor">
    <location>
        <begin position="1"/>
        <end position="156"/>
    </location>
</feature>
<organism>
    <name type="scientific">Shewanella baltica (strain OS223)</name>
    <dbReference type="NCBI Taxonomy" id="407976"/>
    <lineage>
        <taxon>Bacteria</taxon>
        <taxon>Pseudomonadati</taxon>
        <taxon>Pseudomonadota</taxon>
        <taxon>Gammaproteobacteria</taxon>
        <taxon>Alteromonadales</taxon>
        <taxon>Shewanellaceae</taxon>
        <taxon>Shewanella</taxon>
    </lineage>
</organism>
<sequence length="156" mass="16955">MQTTKNQDDLVRIFKSILKEERFGSQSEIVTALQAEGFGNINQSKVSRMLSKFGAVRTRNAKQEMVYCLPAELGVPTAGSPLKNLVLDVDHNQAMIVVRTSPGAAQLIARLLDSIGKPEGILGTIAGDDTIFICPSSIQDIADTLETIKSLFNYAE</sequence>
<dbReference type="EMBL" id="CP001252">
    <property type="protein sequence ID" value="ACK48107.1"/>
    <property type="molecule type" value="Genomic_DNA"/>
</dbReference>
<dbReference type="RefSeq" id="WP_006080175.1">
    <property type="nucleotide sequence ID" value="NC_011663.1"/>
</dbReference>
<dbReference type="SMR" id="B8EB56"/>
<dbReference type="GeneID" id="11773825"/>
<dbReference type="KEGG" id="sbp:Sbal223_3628"/>
<dbReference type="HOGENOM" id="CLU_097103_2_0_6"/>
<dbReference type="UniPathway" id="UPA00068"/>
<dbReference type="Proteomes" id="UP000002507">
    <property type="component" value="Chromosome"/>
</dbReference>
<dbReference type="GO" id="GO:0005737">
    <property type="term" value="C:cytoplasm"/>
    <property type="evidence" value="ECO:0007669"/>
    <property type="project" value="UniProtKB-SubCell"/>
</dbReference>
<dbReference type="GO" id="GO:0034618">
    <property type="term" value="F:arginine binding"/>
    <property type="evidence" value="ECO:0007669"/>
    <property type="project" value="InterPro"/>
</dbReference>
<dbReference type="GO" id="GO:0003677">
    <property type="term" value="F:DNA binding"/>
    <property type="evidence" value="ECO:0007669"/>
    <property type="project" value="UniProtKB-KW"/>
</dbReference>
<dbReference type="GO" id="GO:0003700">
    <property type="term" value="F:DNA-binding transcription factor activity"/>
    <property type="evidence" value="ECO:0007669"/>
    <property type="project" value="UniProtKB-UniRule"/>
</dbReference>
<dbReference type="GO" id="GO:0006526">
    <property type="term" value="P:L-arginine biosynthetic process"/>
    <property type="evidence" value="ECO:0007669"/>
    <property type="project" value="UniProtKB-UniPathway"/>
</dbReference>
<dbReference type="GO" id="GO:0051259">
    <property type="term" value="P:protein complex oligomerization"/>
    <property type="evidence" value="ECO:0007669"/>
    <property type="project" value="InterPro"/>
</dbReference>
<dbReference type="GO" id="GO:1900079">
    <property type="term" value="P:regulation of arginine biosynthetic process"/>
    <property type="evidence" value="ECO:0007669"/>
    <property type="project" value="UniProtKB-UniRule"/>
</dbReference>
<dbReference type="Gene3D" id="3.30.1360.40">
    <property type="match status" value="1"/>
</dbReference>
<dbReference type="Gene3D" id="1.10.10.10">
    <property type="entry name" value="Winged helix-like DNA-binding domain superfamily/Winged helix DNA-binding domain"/>
    <property type="match status" value="1"/>
</dbReference>
<dbReference type="HAMAP" id="MF_00173">
    <property type="entry name" value="Arg_repressor"/>
    <property type="match status" value="1"/>
</dbReference>
<dbReference type="InterPro" id="IPR001669">
    <property type="entry name" value="Arg_repress"/>
</dbReference>
<dbReference type="InterPro" id="IPR020899">
    <property type="entry name" value="Arg_repress_C"/>
</dbReference>
<dbReference type="InterPro" id="IPR036251">
    <property type="entry name" value="Arg_repress_C_sf"/>
</dbReference>
<dbReference type="InterPro" id="IPR020900">
    <property type="entry name" value="Arg_repress_DNA-bd"/>
</dbReference>
<dbReference type="InterPro" id="IPR036388">
    <property type="entry name" value="WH-like_DNA-bd_sf"/>
</dbReference>
<dbReference type="InterPro" id="IPR036390">
    <property type="entry name" value="WH_DNA-bd_sf"/>
</dbReference>
<dbReference type="NCBIfam" id="TIGR01529">
    <property type="entry name" value="argR_whole"/>
    <property type="match status" value="1"/>
</dbReference>
<dbReference type="NCBIfam" id="NF003457">
    <property type="entry name" value="PRK05066.1"/>
    <property type="match status" value="1"/>
</dbReference>
<dbReference type="PANTHER" id="PTHR34471">
    <property type="entry name" value="ARGININE REPRESSOR"/>
    <property type="match status" value="1"/>
</dbReference>
<dbReference type="PANTHER" id="PTHR34471:SF1">
    <property type="entry name" value="ARGININE REPRESSOR"/>
    <property type="match status" value="1"/>
</dbReference>
<dbReference type="Pfam" id="PF01316">
    <property type="entry name" value="Arg_repressor"/>
    <property type="match status" value="1"/>
</dbReference>
<dbReference type="Pfam" id="PF02863">
    <property type="entry name" value="Arg_repressor_C"/>
    <property type="match status" value="1"/>
</dbReference>
<dbReference type="PRINTS" id="PR01467">
    <property type="entry name" value="ARGREPRESSOR"/>
</dbReference>
<dbReference type="SUPFAM" id="SSF55252">
    <property type="entry name" value="C-terminal domain of arginine repressor"/>
    <property type="match status" value="1"/>
</dbReference>
<dbReference type="SUPFAM" id="SSF46785">
    <property type="entry name" value="Winged helix' DNA-binding domain"/>
    <property type="match status" value="1"/>
</dbReference>
<accession>B8EB56</accession>
<keyword id="KW-0028">Amino-acid biosynthesis</keyword>
<keyword id="KW-0055">Arginine biosynthesis</keyword>
<keyword id="KW-0963">Cytoplasm</keyword>
<keyword id="KW-0238">DNA-binding</keyword>
<keyword id="KW-0678">Repressor</keyword>
<keyword id="KW-0804">Transcription</keyword>
<keyword id="KW-0805">Transcription regulation</keyword>
<reference key="1">
    <citation type="submission" date="2008-12" db="EMBL/GenBank/DDBJ databases">
        <title>Complete sequence of chromosome of Shewanella baltica OS223.</title>
        <authorList>
            <consortium name="US DOE Joint Genome Institute"/>
            <person name="Lucas S."/>
            <person name="Copeland A."/>
            <person name="Lapidus A."/>
            <person name="Glavina del Rio T."/>
            <person name="Dalin E."/>
            <person name="Tice H."/>
            <person name="Bruce D."/>
            <person name="Goodwin L."/>
            <person name="Pitluck S."/>
            <person name="Chertkov O."/>
            <person name="Meincke L."/>
            <person name="Brettin T."/>
            <person name="Detter J.C."/>
            <person name="Han C."/>
            <person name="Kuske C.R."/>
            <person name="Larimer F."/>
            <person name="Land M."/>
            <person name="Hauser L."/>
            <person name="Kyrpides N."/>
            <person name="Ovchinnikova G."/>
            <person name="Brettar I."/>
            <person name="Rodrigues J."/>
            <person name="Konstantinidis K."/>
            <person name="Tiedje J."/>
        </authorList>
    </citation>
    <scope>NUCLEOTIDE SEQUENCE [LARGE SCALE GENOMIC DNA]</scope>
    <source>
        <strain>OS223</strain>
    </source>
</reference>
<comment type="function">
    <text evidence="1">Regulates arginine biosynthesis genes.</text>
</comment>
<comment type="pathway">
    <text>Amino-acid biosynthesis; L-arginine biosynthesis [regulation].</text>
</comment>
<comment type="subcellular location">
    <subcellularLocation>
        <location evidence="1">Cytoplasm</location>
    </subcellularLocation>
</comment>
<comment type="similarity">
    <text evidence="1">Belongs to the ArgR family.</text>
</comment>